<reference key="1">
    <citation type="journal article" date="1997" name="J. Bacteriol.">
        <title>Quorum sensing in Vibrio anguillarum: characterization of the vanI/vanR locus and identification of the autoinducer N-(3-oxodecanoyl)-L-homoserine lactone.</title>
        <authorList>
            <person name="Milton D.L."/>
            <person name="Hardman A."/>
            <person name="Camara M."/>
            <person name="Chhabra S.R."/>
            <person name="Bycroft B.W."/>
            <person name="Stewart G.S.A.B."/>
            <person name="Williams P."/>
        </authorList>
    </citation>
    <scope>NUCLEOTIDE SEQUENCE [GENOMIC DNA]</scope>
    <source>
        <strain>NB10 / Serotype O1</strain>
    </source>
</reference>
<accession>P74946</accession>
<organism>
    <name type="scientific">Vibrio anguillarum</name>
    <name type="common">Listonella anguillarum</name>
    <dbReference type="NCBI Taxonomy" id="55601"/>
    <lineage>
        <taxon>Bacteria</taxon>
        <taxon>Pseudomonadati</taxon>
        <taxon>Pseudomonadota</taxon>
        <taxon>Gammaproteobacteria</taxon>
        <taxon>Vibrionales</taxon>
        <taxon>Vibrionaceae</taxon>
        <taxon>Vibrio</taxon>
    </lineage>
</organism>
<comment type="function">
    <text>Probable transcriptional activator. Binds to autoinducer molecule ODHL.</text>
</comment>
<comment type="similarity">
    <text evidence="2">Belongs to the autoinducer-regulated transcriptional regulatory protein family.</text>
</comment>
<keyword id="KW-0010">Activator</keyword>
<keyword id="KW-0238">DNA-binding</keyword>
<keyword id="KW-0673">Quorum sensing</keyword>
<keyword id="KW-0804">Transcription</keyword>
<keyword id="KW-0805">Transcription regulation</keyword>
<gene>
    <name type="primary">vanR</name>
</gene>
<proteinExistence type="inferred from homology"/>
<protein>
    <recommendedName>
        <fullName>Transcriptional activator protein VanR</fullName>
    </recommendedName>
</protein>
<sequence length="240" mass="27253">MYKILRLIQENQQITSHDDLENVLNGLNNLIGHEFFLFGLSFQPTLKTSETLVTDNYPNSWRQQYDESGFMHIDPIVKYSITNFLPIRWDDAKRVNNDGRVIFEEARCNGLKAGFSIPIHGLRGEFGMISFATSDTKSYDLNQQSIHTSQLIVPLLAHNIGNITRYHKDAKPRAVLTAREVQCLAWAAEGKSAWEIATIINTSERTVKFHFSNACKKLGATNRYQAITKAILGGYINPYL</sequence>
<evidence type="ECO:0000255" key="1">
    <source>
        <dbReference type="PROSITE-ProRule" id="PRU00411"/>
    </source>
</evidence>
<evidence type="ECO:0000305" key="2"/>
<name>VANR_VIBAN</name>
<feature type="chain" id="PRO_0000184195" description="Transcriptional activator protein VanR">
    <location>
        <begin position="1"/>
        <end position="240"/>
    </location>
</feature>
<feature type="domain" description="HTH luxR-type" evidence="1">
    <location>
        <begin position="169"/>
        <end position="234"/>
    </location>
</feature>
<feature type="DNA-binding region" description="H-T-H motif" evidence="1">
    <location>
        <begin position="193"/>
        <end position="212"/>
    </location>
</feature>
<dbReference type="EMBL" id="U69677">
    <property type="protein sequence ID" value="AAC45213.1"/>
    <property type="molecule type" value="Genomic_DNA"/>
</dbReference>
<dbReference type="RefSeq" id="WP_013868064.1">
    <property type="nucleotide sequence ID" value="NZ_VSLF01000016.1"/>
</dbReference>
<dbReference type="SMR" id="P74946"/>
<dbReference type="STRING" id="55601.AA407_14790"/>
<dbReference type="OMA" id="CEILQWA"/>
<dbReference type="GO" id="GO:0003677">
    <property type="term" value="F:DNA binding"/>
    <property type="evidence" value="ECO:0007669"/>
    <property type="project" value="UniProtKB-KW"/>
</dbReference>
<dbReference type="GO" id="GO:1901336">
    <property type="term" value="P:lactone biosynthetic process"/>
    <property type="evidence" value="ECO:0000315"/>
    <property type="project" value="CACAO"/>
</dbReference>
<dbReference type="GO" id="GO:0009372">
    <property type="term" value="P:quorum sensing"/>
    <property type="evidence" value="ECO:0007669"/>
    <property type="project" value="UniProtKB-KW"/>
</dbReference>
<dbReference type="GO" id="GO:0006355">
    <property type="term" value="P:regulation of DNA-templated transcription"/>
    <property type="evidence" value="ECO:0007669"/>
    <property type="project" value="InterPro"/>
</dbReference>
<dbReference type="CDD" id="cd06170">
    <property type="entry name" value="LuxR_C_like"/>
    <property type="match status" value="1"/>
</dbReference>
<dbReference type="Gene3D" id="3.30.450.80">
    <property type="entry name" value="Transcription factor LuxR-like, autoinducer-binding domain"/>
    <property type="match status" value="1"/>
</dbReference>
<dbReference type="Gene3D" id="1.10.10.10">
    <property type="entry name" value="Winged helix-like DNA-binding domain superfamily/Winged helix DNA-binding domain"/>
    <property type="match status" value="1"/>
</dbReference>
<dbReference type="InterPro" id="IPR016032">
    <property type="entry name" value="Sig_transdc_resp-reg_C-effctor"/>
</dbReference>
<dbReference type="InterPro" id="IPR005143">
    <property type="entry name" value="TF_LuxR_autoind-bd_dom"/>
</dbReference>
<dbReference type="InterPro" id="IPR036693">
    <property type="entry name" value="TF_LuxR_autoind-bd_dom_sf"/>
</dbReference>
<dbReference type="InterPro" id="IPR000792">
    <property type="entry name" value="Tscrpt_reg_LuxR_C"/>
</dbReference>
<dbReference type="InterPro" id="IPR036388">
    <property type="entry name" value="WH-like_DNA-bd_sf"/>
</dbReference>
<dbReference type="PANTHER" id="PTHR44688">
    <property type="entry name" value="DNA-BINDING TRANSCRIPTIONAL ACTIVATOR DEVR_DOSR"/>
    <property type="match status" value="1"/>
</dbReference>
<dbReference type="PANTHER" id="PTHR44688:SF16">
    <property type="entry name" value="DNA-BINDING TRANSCRIPTIONAL ACTIVATOR DEVR_DOSR"/>
    <property type="match status" value="1"/>
</dbReference>
<dbReference type="Pfam" id="PF03472">
    <property type="entry name" value="Autoind_bind"/>
    <property type="match status" value="1"/>
</dbReference>
<dbReference type="Pfam" id="PF00196">
    <property type="entry name" value="GerE"/>
    <property type="match status" value="1"/>
</dbReference>
<dbReference type="PRINTS" id="PR00038">
    <property type="entry name" value="HTHLUXR"/>
</dbReference>
<dbReference type="SMART" id="SM00421">
    <property type="entry name" value="HTH_LUXR"/>
    <property type="match status" value="1"/>
</dbReference>
<dbReference type="SUPFAM" id="SSF46894">
    <property type="entry name" value="C-terminal effector domain of the bipartite response regulators"/>
    <property type="match status" value="1"/>
</dbReference>
<dbReference type="SUPFAM" id="SSF75516">
    <property type="entry name" value="Pheromone-binding domain of LuxR-like quorum-sensing transcription factors"/>
    <property type="match status" value="1"/>
</dbReference>
<dbReference type="PROSITE" id="PS50043">
    <property type="entry name" value="HTH_LUXR_2"/>
    <property type="match status" value="1"/>
</dbReference>